<keyword id="KW-0067">ATP-binding</keyword>
<keyword id="KW-0963">Cytoplasm</keyword>
<keyword id="KW-0227">DNA damage</keyword>
<keyword id="KW-0228">DNA excision</keyword>
<keyword id="KW-0234">DNA repair</keyword>
<keyword id="KW-0267">Excision nuclease</keyword>
<keyword id="KW-0547">Nucleotide-binding</keyword>
<keyword id="KW-1185">Reference proteome</keyword>
<keyword id="KW-0742">SOS response</keyword>
<accession>Q5GXX4</accession>
<dbReference type="EMBL" id="AE013598">
    <property type="protein sequence ID" value="AAW76447.1"/>
    <property type="molecule type" value="Genomic_DNA"/>
</dbReference>
<dbReference type="SMR" id="Q5GXX4"/>
<dbReference type="STRING" id="291331.XOO3193"/>
<dbReference type="KEGG" id="xoo:XOO3193"/>
<dbReference type="HOGENOM" id="CLU_009621_2_1_6"/>
<dbReference type="Proteomes" id="UP000006735">
    <property type="component" value="Chromosome"/>
</dbReference>
<dbReference type="GO" id="GO:0005737">
    <property type="term" value="C:cytoplasm"/>
    <property type="evidence" value="ECO:0007669"/>
    <property type="project" value="UniProtKB-SubCell"/>
</dbReference>
<dbReference type="GO" id="GO:0009380">
    <property type="term" value="C:excinuclease repair complex"/>
    <property type="evidence" value="ECO:0007669"/>
    <property type="project" value="InterPro"/>
</dbReference>
<dbReference type="GO" id="GO:0005524">
    <property type="term" value="F:ATP binding"/>
    <property type="evidence" value="ECO:0007669"/>
    <property type="project" value="UniProtKB-UniRule"/>
</dbReference>
<dbReference type="GO" id="GO:0016887">
    <property type="term" value="F:ATP hydrolysis activity"/>
    <property type="evidence" value="ECO:0007669"/>
    <property type="project" value="InterPro"/>
</dbReference>
<dbReference type="GO" id="GO:0003677">
    <property type="term" value="F:DNA binding"/>
    <property type="evidence" value="ECO:0007669"/>
    <property type="project" value="UniProtKB-UniRule"/>
</dbReference>
<dbReference type="GO" id="GO:0009381">
    <property type="term" value="F:excinuclease ABC activity"/>
    <property type="evidence" value="ECO:0007669"/>
    <property type="project" value="UniProtKB-UniRule"/>
</dbReference>
<dbReference type="GO" id="GO:0006289">
    <property type="term" value="P:nucleotide-excision repair"/>
    <property type="evidence" value="ECO:0007669"/>
    <property type="project" value="UniProtKB-UniRule"/>
</dbReference>
<dbReference type="GO" id="GO:0009432">
    <property type="term" value="P:SOS response"/>
    <property type="evidence" value="ECO:0007669"/>
    <property type="project" value="UniProtKB-UniRule"/>
</dbReference>
<dbReference type="CDD" id="cd17916">
    <property type="entry name" value="DEXHc_UvrB"/>
    <property type="match status" value="1"/>
</dbReference>
<dbReference type="CDD" id="cd18790">
    <property type="entry name" value="SF2_C_UvrB"/>
    <property type="match status" value="1"/>
</dbReference>
<dbReference type="FunFam" id="3.40.50.300:FF:000477">
    <property type="entry name" value="UvrABC system protein B"/>
    <property type="match status" value="1"/>
</dbReference>
<dbReference type="Gene3D" id="6.10.140.240">
    <property type="match status" value="1"/>
</dbReference>
<dbReference type="Gene3D" id="3.40.50.300">
    <property type="entry name" value="P-loop containing nucleotide triphosphate hydrolases"/>
    <property type="match status" value="3"/>
</dbReference>
<dbReference type="Gene3D" id="4.10.860.10">
    <property type="entry name" value="UVR domain"/>
    <property type="match status" value="1"/>
</dbReference>
<dbReference type="HAMAP" id="MF_00204">
    <property type="entry name" value="UvrB"/>
    <property type="match status" value="1"/>
</dbReference>
<dbReference type="InterPro" id="IPR006935">
    <property type="entry name" value="Helicase/UvrB_N"/>
</dbReference>
<dbReference type="InterPro" id="IPR014001">
    <property type="entry name" value="Helicase_ATP-bd"/>
</dbReference>
<dbReference type="InterPro" id="IPR001650">
    <property type="entry name" value="Helicase_C-like"/>
</dbReference>
<dbReference type="InterPro" id="IPR027417">
    <property type="entry name" value="P-loop_NTPase"/>
</dbReference>
<dbReference type="InterPro" id="IPR001943">
    <property type="entry name" value="UVR_dom"/>
</dbReference>
<dbReference type="InterPro" id="IPR036876">
    <property type="entry name" value="UVR_dom_sf"/>
</dbReference>
<dbReference type="InterPro" id="IPR004807">
    <property type="entry name" value="UvrB"/>
</dbReference>
<dbReference type="InterPro" id="IPR041471">
    <property type="entry name" value="UvrB_inter"/>
</dbReference>
<dbReference type="InterPro" id="IPR024759">
    <property type="entry name" value="UvrB_YAD/RRR_dom"/>
</dbReference>
<dbReference type="NCBIfam" id="NF003673">
    <property type="entry name" value="PRK05298.1"/>
    <property type="match status" value="1"/>
</dbReference>
<dbReference type="NCBIfam" id="TIGR00631">
    <property type="entry name" value="uvrb"/>
    <property type="match status" value="1"/>
</dbReference>
<dbReference type="PANTHER" id="PTHR24029">
    <property type="entry name" value="UVRABC SYSTEM PROTEIN B"/>
    <property type="match status" value="1"/>
</dbReference>
<dbReference type="PANTHER" id="PTHR24029:SF0">
    <property type="entry name" value="UVRABC SYSTEM PROTEIN B"/>
    <property type="match status" value="1"/>
</dbReference>
<dbReference type="Pfam" id="PF00271">
    <property type="entry name" value="Helicase_C"/>
    <property type="match status" value="1"/>
</dbReference>
<dbReference type="Pfam" id="PF04851">
    <property type="entry name" value="ResIII"/>
    <property type="match status" value="1"/>
</dbReference>
<dbReference type="Pfam" id="PF02151">
    <property type="entry name" value="UVR"/>
    <property type="match status" value="1"/>
</dbReference>
<dbReference type="Pfam" id="PF12344">
    <property type="entry name" value="UvrB"/>
    <property type="match status" value="1"/>
</dbReference>
<dbReference type="Pfam" id="PF17757">
    <property type="entry name" value="UvrB_inter"/>
    <property type="match status" value="1"/>
</dbReference>
<dbReference type="SMART" id="SM00487">
    <property type="entry name" value="DEXDc"/>
    <property type="match status" value="1"/>
</dbReference>
<dbReference type="SMART" id="SM00490">
    <property type="entry name" value="HELICc"/>
    <property type="match status" value="1"/>
</dbReference>
<dbReference type="SUPFAM" id="SSF46600">
    <property type="entry name" value="C-terminal UvrC-binding domain of UvrB"/>
    <property type="match status" value="1"/>
</dbReference>
<dbReference type="SUPFAM" id="SSF52540">
    <property type="entry name" value="P-loop containing nucleoside triphosphate hydrolases"/>
    <property type="match status" value="2"/>
</dbReference>
<dbReference type="PROSITE" id="PS51192">
    <property type="entry name" value="HELICASE_ATP_BIND_1"/>
    <property type="match status" value="1"/>
</dbReference>
<dbReference type="PROSITE" id="PS51194">
    <property type="entry name" value="HELICASE_CTER"/>
    <property type="match status" value="1"/>
</dbReference>
<dbReference type="PROSITE" id="PS50151">
    <property type="entry name" value="UVR"/>
    <property type="match status" value="1"/>
</dbReference>
<sequence length="688" mass="77689">MLASVNSCSLPRDRSMTDRFQLVSPYSPAGDQPAAIDKLVANFEAGLAKQTLLGVTGSGKTYTIANVVQQVQKPTLVMAPNKTLAAQLYGEFKSFFPHNAVEYFVSYYDYYQPEAYVPSSDTFIEKDSSINEHIEQMRLSATKTLLSRRDSLVVATVSAIYGLGAPEDYLSLRLILSIGEHIDQRQLIRHLTDLQYTRNEFELTRGAFRVRGEVLDVFPAESDTEALRIELFDGDIEQLTLFDPLTGETLRKLQRYTVYPKTHYATTRERTLSAVDTIKEELKERLEQLYSQNKLVEAQRLAQRTQFDLEMMAEVGFCNGIENYSRHLTGKAPGEPPPTLFDYLPPDALLVIDESHVTIPQIGAMYKGDRSRKETLVEFGFRLPSALDNRPLRFEEWEARSPRSIYVSATPGPYELRESAGEVTELVVRPTGLIDPVVEIRPVGTQVDDLMSEIHERIKLGDRVLVTTLTKRMAENLTEYLGEHGIRVRYLHSDIDTVERVEIIRDLRLGKFDVLVGINLLREGLDMPEVSLVAILDADKEGFLRSTGSLIQTIGRAARNLRGKAILYADKMTRSMQAAIDESDRRREKQVEYNLEHGITPESVERPISDIMEGAREDAAEKKSGKGRSKSRQVAEETPDYRAMKPAEIAGKLKSLEQKMYQHAKDLEFEAAAQIRDQIQKLKTASLA</sequence>
<comment type="function">
    <text evidence="1">The UvrABC repair system catalyzes the recognition and processing of DNA lesions. A damage recognition complex composed of 2 UvrA and 2 UvrB subunits scans DNA for abnormalities. Upon binding of the UvrA(2)B(2) complex to a putative damaged site, the DNA wraps around one UvrB monomer. DNA wrap is dependent on ATP binding by UvrB and probably causes local melting of the DNA helix, facilitating insertion of UvrB beta-hairpin between the DNA strands. Then UvrB probes one DNA strand for the presence of a lesion. If a lesion is found the UvrA subunits dissociate and the UvrB-DNA preincision complex is formed. This complex is subsequently bound by UvrC and the second UvrB is released. If no lesion is found, the DNA wraps around the other UvrB subunit that will check the other stand for damage.</text>
</comment>
<comment type="subunit">
    <text evidence="1">Forms a heterotetramer with UvrA during the search for lesions. Interacts with UvrC in an incision complex.</text>
</comment>
<comment type="subcellular location">
    <subcellularLocation>
        <location evidence="1">Cytoplasm</location>
    </subcellularLocation>
</comment>
<comment type="domain">
    <text evidence="1">The beta-hairpin motif is involved in DNA binding.</text>
</comment>
<comment type="similarity">
    <text evidence="1">Belongs to the UvrB family.</text>
</comment>
<organism>
    <name type="scientific">Xanthomonas oryzae pv. oryzae (strain KACC10331 / KXO85)</name>
    <dbReference type="NCBI Taxonomy" id="291331"/>
    <lineage>
        <taxon>Bacteria</taxon>
        <taxon>Pseudomonadati</taxon>
        <taxon>Pseudomonadota</taxon>
        <taxon>Gammaproteobacteria</taxon>
        <taxon>Lysobacterales</taxon>
        <taxon>Lysobacteraceae</taxon>
        <taxon>Xanthomonas</taxon>
    </lineage>
</organism>
<name>UVRB_XANOR</name>
<gene>
    <name evidence="1" type="primary">uvrB</name>
    <name type="ordered locus">XOO3193</name>
</gene>
<feature type="chain" id="PRO_0000227385" description="UvrABC system protein B">
    <location>
        <begin position="1"/>
        <end position="688"/>
    </location>
</feature>
<feature type="domain" description="Helicase ATP-binding" evidence="1">
    <location>
        <begin position="41"/>
        <end position="429"/>
    </location>
</feature>
<feature type="domain" description="Helicase C-terminal" evidence="1">
    <location>
        <begin position="446"/>
        <end position="612"/>
    </location>
</feature>
<feature type="domain" description="UVR" evidence="1">
    <location>
        <begin position="650"/>
        <end position="685"/>
    </location>
</feature>
<feature type="region of interest" description="Disordered" evidence="2">
    <location>
        <begin position="616"/>
        <end position="646"/>
    </location>
</feature>
<feature type="short sequence motif" description="Beta-hairpin">
    <location>
        <begin position="107"/>
        <end position="130"/>
    </location>
</feature>
<feature type="compositionally biased region" description="Basic and acidic residues" evidence="2">
    <location>
        <begin position="633"/>
        <end position="645"/>
    </location>
</feature>
<feature type="binding site" evidence="1">
    <location>
        <begin position="54"/>
        <end position="61"/>
    </location>
    <ligand>
        <name>ATP</name>
        <dbReference type="ChEBI" id="CHEBI:30616"/>
    </ligand>
</feature>
<reference key="1">
    <citation type="journal article" date="2005" name="Nucleic Acids Res.">
        <title>The genome sequence of Xanthomonas oryzae pathovar oryzae KACC10331, the bacterial blight pathogen of rice.</title>
        <authorList>
            <person name="Lee B.-M."/>
            <person name="Park Y.-J."/>
            <person name="Park D.-S."/>
            <person name="Kang H.-W."/>
            <person name="Kim J.-G."/>
            <person name="Song E.-S."/>
            <person name="Park I.-C."/>
            <person name="Yoon U.-H."/>
            <person name="Hahn J.-H."/>
            <person name="Koo B.-S."/>
            <person name="Lee G.-B."/>
            <person name="Kim H."/>
            <person name="Park H.-S."/>
            <person name="Yoon K.-O."/>
            <person name="Kim J.-H."/>
            <person name="Jung C.-H."/>
            <person name="Koh N.-H."/>
            <person name="Seo J.-S."/>
            <person name="Go S.-J."/>
        </authorList>
    </citation>
    <scope>NUCLEOTIDE SEQUENCE [LARGE SCALE GENOMIC DNA]</scope>
    <source>
        <strain>KACC10331 / KXO85</strain>
    </source>
</reference>
<evidence type="ECO:0000255" key="1">
    <source>
        <dbReference type="HAMAP-Rule" id="MF_00204"/>
    </source>
</evidence>
<evidence type="ECO:0000256" key="2">
    <source>
        <dbReference type="SAM" id="MobiDB-lite"/>
    </source>
</evidence>
<protein>
    <recommendedName>
        <fullName evidence="1">UvrABC system protein B</fullName>
        <shortName evidence="1">Protein UvrB</shortName>
    </recommendedName>
    <alternativeName>
        <fullName evidence="1">Excinuclease ABC subunit B</fullName>
    </alternativeName>
</protein>
<proteinExistence type="inferred from homology"/>